<comment type="function">
    <text evidence="1">Catalyzes the NADPH-dependent reduction of N-acetyl-5-glutamyl phosphate to yield N-acetyl-L-glutamate 5-semialdehyde.</text>
</comment>
<comment type="catalytic activity">
    <reaction evidence="1">
        <text>N-acetyl-L-glutamate 5-semialdehyde + phosphate + NADP(+) = N-acetyl-L-glutamyl 5-phosphate + NADPH + H(+)</text>
        <dbReference type="Rhea" id="RHEA:21588"/>
        <dbReference type="ChEBI" id="CHEBI:15378"/>
        <dbReference type="ChEBI" id="CHEBI:29123"/>
        <dbReference type="ChEBI" id="CHEBI:43474"/>
        <dbReference type="ChEBI" id="CHEBI:57783"/>
        <dbReference type="ChEBI" id="CHEBI:57936"/>
        <dbReference type="ChEBI" id="CHEBI:58349"/>
        <dbReference type="EC" id="1.2.1.38"/>
    </reaction>
</comment>
<comment type="pathway">
    <text evidence="1">Amino-acid biosynthesis; L-arginine biosynthesis; N(2)-acetyl-L-ornithine from L-glutamate: step 3/4.</text>
</comment>
<comment type="subcellular location">
    <subcellularLocation>
        <location evidence="1">Cytoplasm</location>
    </subcellularLocation>
</comment>
<comment type="similarity">
    <text evidence="1">Belongs to the NAGSA dehydrogenase family. Type 1 subfamily.</text>
</comment>
<reference key="1">
    <citation type="journal article" date="2007" name="Proc. Natl. Acad. Sci. U.S.A.">
        <title>Parallel genomic evolution and metabolic interdependence in an ancient symbiosis.</title>
        <authorList>
            <person name="McCutcheon J.P."/>
            <person name="Moran N.A."/>
        </authorList>
    </citation>
    <scope>NUCLEOTIDE SEQUENCE [LARGE SCALE GENOMIC DNA]</scope>
    <source>
        <strain>GWSS</strain>
    </source>
</reference>
<gene>
    <name evidence="1" type="primary">argC</name>
    <name type="ordered locus">SMGWSS_110</name>
</gene>
<feature type="chain" id="PRO_1000076748" description="N-acetyl-gamma-glutamyl-phosphate reductase">
    <location>
        <begin position="1"/>
        <end position="325"/>
    </location>
</feature>
<feature type="active site" evidence="1">
    <location>
        <position position="135"/>
    </location>
</feature>
<accession>A8Z5X3</accession>
<dbReference type="EC" id="1.2.1.38" evidence="1"/>
<dbReference type="EMBL" id="CP000770">
    <property type="protein sequence ID" value="ABS30524.1"/>
    <property type="molecule type" value="Genomic_DNA"/>
</dbReference>
<dbReference type="SMR" id="A8Z5X3"/>
<dbReference type="STRING" id="444179.SMGWSS_110"/>
<dbReference type="KEGG" id="smg:SMGWSS_110"/>
<dbReference type="HOGENOM" id="CLU_006384_0_1_10"/>
<dbReference type="UniPathway" id="UPA00068">
    <property type="reaction ID" value="UER00108"/>
</dbReference>
<dbReference type="Proteomes" id="UP000000781">
    <property type="component" value="Chromosome"/>
</dbReference>
<dbReference type="GO" id="GO:0005737">
    <property type="term" value="C:cytoplasm"/>
    <property type="evidence" value="ECO:0007669"/>
    <property type="project" value="UniProtKB-SubCell"/>
</dbReference>
<dbReference type="GO" id="GO:0003942">
    <property type="term" value="F:N-acetyl-gamma-glutamyl-phosphate reductase activity"/>
    <property type="evidence" value="ECO:0007669"/>
    <property type="project" value="UniProtKB-UniRule"/>
</dbReference>
<dbReference type="GO" id="GO:0051287">
    <property type="term" value="F:NAD binding"/>
    <property type="evidence" value="ECO:0007669"/>
    <property type="project" value="InterPro"/>
</dbReference>
<dbReference type="GO" id="GO:0070401">
    <property type="term" value="F:NADP+ binding"/>
    <property type="evidence" value="ECO:0007669"/>
    <property type="project" value="InterPro"/>
</dbReference>
<dbReference type="GO" id="GO:0006526">
    <property type="term" value="P:L-arginine biosynthetic process"/>
    <property type="evidence" value="ECO:0007669"/>
    <property type="project" value="UniProtKB-UniRule"/>
</dbReference>
<dbReference type="CDD" id="cd23934">
    <property type="entry name" value="AGPR_1_C"/>
    <property type="match status" value="1"/>
</dbReference>
<dbReference type="Gene3D" id="3.30.360.10">
    <property type="entry name" value="Dihydrodipicolinate Reductase, domain 2"/>
    <property type="match status" value="1"/>
</dbReference>
<dbReference type="Gene3D" id="3.40.50.720">
    <property type="entry name" value="NAD(P)-binding Rossmann-like Domain"/>
    <property type="match status" value="1"/>
</dbReference>
<dbReference type="HAMAP" id="MF_00150">
    <property type="entry name" value="ArgC_type1"/>
    <property type="match status" value="1"/>
</dbReference>
<dbReference type="InterPro" id="IPR023013">
    <property type="entry name" value="AGPR_AS"/>
</dbReference>
<dbReference type="InterPro" id="IPR000706">
    <property type="entry name" value="AGPR_type-1"/>
</dbReference>
<dbReference type="InterPro" id="IPR036291">
    <property type="entry name" value="NAD(P)-bd_dom_sf"/>
</dbReference>
<dbReference type="InterPro" id="IPR050085">
    <property type="entry name" value="NAGSA_dehydrogenase"/>
</dbReference>
<dbReference type="InterPro" id="IPR000534">
    <property type="entry name" value="Semialdehyde_DH_NAD-bd"/>
</dbReference>
<dbReference type="NCBIfam" id="TIGR01850">
    <property type="entry name" value="argC"/>
    <property type="match status" value="1"/>
</dbReference>
<dbReference type="PANTHER" id="PTHR32338:SF10">
    <property type="entry name" value="N-ACETYL-GAMMA-GLUTAMYL-PHOSPHATE REDUCTASE, CHLOROPLASTIC-RELATED"/>
    <property type="match status" value="1"/>
</dbReference>
<dbReference type="PANTHER" id="PTHR32338">
    <property type="entry name" value="N-ACETYL-GAMMA-GLUTAMYL-PHOSPHATE REDUCTASE, CHLOROPLASTIC-RELATED-RELATED"/>
    <property type="match status" value="1"/>
</dbReference>
<dbReference type="Pfam" id="PF01118">
    <property type="entry name" value="Semialdhyde_dh"/>
    <property type="match status" value="1"/>
</dbReference>
<dbReference type="Pfam" id="PF22698">
    <property type="entry name" value="Semialdhyde_dhC_1"/>
    <property type="match status" value="1"/>
</dbReference>
<dbReference type="SMART" id="SM00859">
    <property type="entry name" value="Semialdhyde_dh"/>
    <property type="match status" value="1"/>
</dbReference>
<dbReference type="SUPFAM" id="SSF55347">
    <property type="entry name" value="Glyceraldehyde-3-phosphate dehydrogenase-like, C-terminal domain"/>
    <property type="match status" value="1"/>
</dbReference>
<dbReference type="SUPFAM" id="SSF51735">
    <property type="entry name" value="NAD(P)-binding Rossmann-fold domains"/>
    <property type="match status" value="1"/>
</dbReference>
<dbReference type="PROSITE" id="PS01224">
    <property type="entry name" value="ARGC"/>
    <property type="match status" value="1"/>
</dbReference>
<organism>
    <name type="scientific">Karelsulcia muelleri (strain GWSS)</name>
    <name type="common">Sulcia muelleri</name>
    <dbReference type="NCBI Taxonomy" id="444179"/>
    <lineage>
        <taxon>Bacteria</taxon>
        <taxon>Pseudomonadati</taxon>
        <taxon>Bacteroidota</taxon>
        <taxon>Flavobacteriia</taxon>
        <taxon>Flavobacteriales</taxon>
        <taxon>Candidatus Karelsulcia</taxon>
    </lineage>
</organism>
<keyword id="KW-0028">Amino-acid biosynthesis</keyword>
<keyword id="KW-0055">Arginine biosynthesis</keyword>
<keyword id="KW-0963">Cytoplasm</keyword>
<keyword id="KW-0521">NADP</keyword>
<keyword id="KW-0560">Oxidoreductase</keyword>
<name>ARGC_KARMG</name>
<evidence type="ECO:0000255" key="1">
    <source>
        <dbReference type="HAMAP-Rule" id="MF_00150"/>
    </source>
</evidence>
<proteinExistence type="inferred from homology"/>
<sequence length="325" mass="37075">MIKIGIIGGAGYTANELIKILINHPKVEIKTIVSTTYPGIPIEYIHKDLIGEIKSNKLFSSEITDDIDLLFLCIGHGHSKKILKNISYKINVIDFSNDFRINKNFFFKKRIFNYGLPELNKNIINKYNNIANPGCFATAIQLSILPLAKIKLLKNNIHISAITGSTGAGRINNSKLNFSFRNNNISTYNLFNHNHINEVIQTINKLQNKYDGKIYFIPYRGGFSRGIISTLYTRIDLSFEEIKNIYDKFYKNDPFIFLSEKEIHLKQVINTNKCILNLKYIKNKLIITSIIDNLIKGASGQAVQNMNIMYNFEETCGLKLKPLGL</sequence>
<protein>
    <recommendedName>
        <fullName evidence="1">N-acetyl-gamma-glutamyl-phosphate reductase</fullName>
        <shortName evidence="1">AGPR</shortName>
        <ecNumber evidence="1">1.2.1.38</ecNumber>
    </recommendedName>
    <alternativeName>
        <fullName evidence="1">N-acetyl-glutamate semialdehyde dehydrogenase</fullName>
        <shortName evidence="1">NAGSA dehydrogenase</shortName>
    </alternativeName>
</protein>